<dbReference type="EC" id="3.1.21.10" evidence="1"/>
<dbReference type="EMBL" id="AE005673">
    <property type="protein sequence ID" value="AAK25200.1"/>
    <property type="molecule type" value="Genomic_DNA"/>
</dbReference>
<dbReference type="PIR" id="D87650">
    <property type="entry name" value="D87650"/>
</dbReference>
<dbReference type="RefSeq" id="NP_422032.1">
    <property type="nucleotide sequence ID" value="NC_002696.2"/>
</dbReference>
<dbReference type="SMR" id="Q9A3G6"/>
<dbReference type="STRING" id="190650.CC_3238"/>
<dbReference type="EnsemblBacteria" id="AAK25200">
    <property type="protein sequence ID" value="AAK25200"/>
    <property type="gene ID" value="CC_3238"/>
</dbReference>
<dbReference type="KEGG" id="ccr:CC_3238"/>
<dbReference type="PATRIC" id="fig|190650.5.peg.3244"/>
<dbReference type="eggNOG" id="COG0817">
    <property type="taxonomic scope" value="Bacteria"/>
</dbReference>
<dbReference type="HOGENOM" id="CLU_091257_1_0_5"/>
<dbReference type="BioCyc" id="CAULO:CC3238-MONOMER"/>
<dbReference type="Proteomes" id="UP000001816">
    <property type="component" value="Chromosome"/>
</dbReference>
<dbReference type="GO" id="GO:0005737">
    <property type="term" value="C:cytoplasm"/>
    <property type="evidence" value="ECO:0007669"/>
    <property type="project" value="UniProtKB-SubCell"/>
</dbReference>
<dbReference type="GO" id="GO:0048476">
    <property type="term" value="C:Holliday junction resolvase complex"/>
    <property type="evidence" value="ECO:0007669"/>
    <property type="project" value="UniProtKB-UniRule"/>
</dbReference>
<dbReference type="GO" id="GO:0008821">
    <property type="term" value="F:crossover junction DNA endonuclease activity"/>
    <property type="evidence" value="ECO:0007669"/>
    <property type="project" value="UniProtKB-UniRule"/>
</dbReference>
<dbReference type="GO" id="GO:0003677">
    <property type="term" value="F:DNA binding"/>
    <property type="evidence" value="ECO:0007669"/>
    <property type="project" value="UniProtKB-KW"/>
</dbReference>
<dbReference type="GO" id="GO:0000287">
    <property type="term" value="F:magnesium ion binding"/>
    <property type="evidence" value="ECO:0007669"/>
    <property type="project" value="UniProtKB-UniRule"/>
</dbReference>
<dbReference type="GO" id="GO:0006310">
    <property type="term" value="P:DNA recombination"/>
    <property type="evidence" value="ECO:0007669"/>
    <property type="project" value="UniProtKB-UniRule"/>
</dbReference>
<dbReference type="GO" id="GO:0006281">
    <property type="term" value="P:DNA repair"/>
    <property type="evidence" value="ECO:0007669"/>
    <property type="project" value="UniProtKB-UniRule"/>
</dbReference>
<dbReference type="GO" id="GO:0009432">
    <property type="term" value="P:SOS response"/>
    <property type="evidence" value="ECO:0000269"/>
    <property type="project" value="CollecTF"/>
</dbReference>
<dbReference type="CDD" id="cd16962">
    <property type="entry name" value="RuvC"/>
    <property type="match status" value="1"/>
</dbReference>
<dbReference type="FunFam" id="3.30.420.10:FF:000002">
    <property type="entry name" value="Crossover junction endodeoxyribonuclease RuvC"/>
    <property type="match status" value="1"/>
</dbReference>
<dbReference type="Gene3D" id="3.30.420.10">
    <property type="entry name" value="Ribonuclease H-like superfamily/Ribonuclease H"/>
    <property type="match status" value="1"/>
</dbReference>
<dbReference type="HAMAP" id="MF_00034">
    <property type="entry name" value="RuvC"/>
    <property type="match status" value="1"/>
</dbReference>
<dbReference type="InterPro" id="IPR012337">
    <property type="entry name" value="RNaseH-like_sf"/>
</dbReference>
<dbReference type="InterPro" id="IPR036397">
    <property type="entry name" value="RNaseH_sf"/>
</dbReference>
<dbReference type="InterPro" id="IPR020563">
    <property type="entry name" value="X-over_junc_endoDNase_Mg_BS"/>
</dbReference>
<dbReference type="InterPro" id="IPR002176">
    <property type="entry name" value="X-over_junc_endoDNase_RuvC"/>
</dbReference>
<dbReference type="NCBIfam" id="TIGR00228">
    <property type="entry name" value="ruvC"/>
    <property type="match status" value="1"/>
</dbReference>
<dbReference type="PANTHER" id="PTHR30194">
    <property type="entry name" value="CROSSOVER JUNCTION ENDODEOXYRIBONUCLEASE RUVC"/>
    <property type="match status" value="1"/>
</dbReference>
<dbReference type="PANTHER" id="PTHR30194:SF3">
    <property type="entry name" value="CROSSOVER JUNCTION ENDODEOXYRIBONUCLEASE RUVC"/>
    <property type="match status" value="1"/>
</dbReference>
<dbReference type="Pfam" id="PF02075">
    <property type="entry name" value="RuvC"/>
    <property type="match status" value="1"/>
</dbReference>
<dbReference type="PRINTS" id="PR00696">
    <property type="entry name" value="RSOLVASERUVC"/>
</dbReference>
<dbReference type="SUPFAM" id="SSF53098">
    <property type="entry name" value="Ribonuclease H-like"/>
    <property type="match status" value="1"/>
</dbReference>
<dbReference type="PROSITE" id="PS01321">
    <property type="entry name" value="RUVC"/>
    <property type="match status" value="1"/>
</dbReference>
<organism>
    <name type="scientific">Caulobacter vibrioides (strain ATCC 19089 / CIP 103742 / CB 15)</name>
    <name type="common">Caulobacter crescentus</name>
    <dbReference type="NCBI Taxonomy" id="190650"/>
    <lineage>
        <taxon>Bacteria</taxon>
        <taxon>Pseudomonadati</taxon>
        <taxon>Pseudomonadota</taxon>
        <taxon>Alphaproteobacteria</taxon>
        <taxon>Caulobacterales</taxon>
        <taxon>Caulobacteraceae</taxon>
        <taxon>Caulobacter</taxon>
    </lineage>
</organism>
<proteinExistence type="inferred from homology"/>
<gene>
    <name evidence="1" type="primary">ruvC</name>
    <name type="ordered locus">CC_3238</name>
</gene>
<reference key="1">
    <citation type="journal article" date="2001" name="Proc. Natl. Acad. Sci. U.S.A.">
        <title>Complete genome sequence of Caulobacter crescentus.</title>
        <authorList>
            <person name="Nierman W.C."/>
            <person name="Feldblyum T.V."/>
            <person name="Laub M.T."/>
            <person name="Paulsen I.T."/>
            <person name="Nelson K.E."/>
            <person name="Eisen J.A."/>
            <person name="Heidelberg J.F."/>
            <person name="Alley M.R.K."/>
            <person name="Ohta N."/>
            <person name="Maddock J.R."/>
            <person name="Potocka I."/>
            <person name="Nelson W.C."/>
            <person name="Newton A."/>
            <person name="Stephens C."/>
            <person name="Phadke N.D."/>
            <person name="Ely B."/>
            <person name="DeBoy R.T."/>
            <person name="Dodson R.J."/>
            <person name="Durkin A.S."/>
            <person name="Gwinn M.L."/>
            <person name="Haft D.H."/>
            <person name="Kolonay J.F."/>
            <person name="Smit J."/>
            <person name="Craven M.B."/>
            <person name="Khouri H.M."/>
            <person name="Shetty J."/>
            <person name="Berry K.J."/>
            <person name="Utterback T.R."/>
            <person name="Tran K."/>
            <person name="Wolf A.M."/>
            <person name="Vamathevan J.J."/>
            <person name="Ermolaeva M.D."/>
            <person name="White O."/>
            <person name="Salzberg S.L."/>
            <person name="Venter J.C."/>
            <person name="Shapiro L."/>
            <person name="Fraser C.M."/>
        </authorList>
    </citation>
    <scope>NUCLEOTIDE SEQUENCE [LARGE SCALE GENOMIC DNA]</scope>
    <source>
        <strain>ATCC 19089 / CIP 103742 / CB 15</strain>
    </source>
</reference>
<comment type="function">
    <text evidence="1">The RuvA-RuvB-RuvC complex processes Holliday junction (HJ) DNA during genetic recombination and DNA repair. Endonuclease that resolves HJ intermediates. Cleaves cruciform DNA by making single-stranded nicks across the HJ at symmetrical positions within the homologous arms, yielding a 5'-phosphate and a 3'-hydroxyl group; requires a central core of homology in the junction. The consensus cleavage sequence is 5'-(A/T)TT(C/G)-3'. Cleavage occurs on the 3'-side of the TT dinucleotide at the point of strand exchange. HJ branch migration catalyzed by RuvA-RuvB allows RuvC to scan DNA until it finds its consensus sequence, where it cleaves and resolves the cruciform DNA.</text>
</comment>
<comment type="catalytic activity">
    <reaction evidence="1">
        <text>Endonucleolytic cleavage at a junction such as a reciprocal single-stranded crossover between two homologous DNA duplexes (Holliday junction).</text>
        <dbReference type="EC" id="3.1.21.10"/>
    </reaction>
</comment>
<comment type="cofactor">
    <cofactor evidence="1">
        <name>Mg(2+)</name>
        <dbReference type="ChEBI" id="CHEBI:18420"/>
    </cofactor>
    <text evidence="1">Binds 2 Mg(2+) ion per subunit.</text>
</comment>
<comment type="subunit">
    <text evidence="1">Homodimer which binds Holliday junction (HJ) DNA. The HJ becomes 2-fold symmetrical on binding to RuvC with unstacked arms; it has a different conformation from HJ DNA in complex with RuvA. In the full resolvosome a probable DNA-RuvA(4)-RuvB(12)-RuvC(2) complex forms which resolves the HJ.</text>
</comment>
<comment type="subcellular location">
    <subcellularLocation>
        <location evidence="1">Cytoplasm</location>
    </subcellularLocation>
</comment>
<comment type="similarity">
    <text evidence="1">Belongs to the RuvC family.</text>
</comment>
<protein>
    <recommendedName>
        <fullName evidence="1">Crossover junction endodeoxyribonuclease RuvC</fullName>
        <ecNumber evidence="1">3.1.21.10</ecNumber>
    </recommendedName>
    <alternativeName>
        <fullName evidence="1">Holliday junction nuclease RuvC</fullName>
    </alternativeName>
    <alternativeName>
        <fullName evidence="1">Holliday junction resolvase RuvC</fullName>
    </alternativeName>
</protein>
<accession>Q9A3G6</accession>
<evidence type="ECO:0000255" key="1">
    <source>
        <dbReference type="HAMAP-Rule" id="MF_00034"/>
    </source>
</evidence>
<sequence>MMNANRLPTRILGLDPGLRRTGWGVLAVEGSRMTHIAHGVITPDEKAEFADRLLHLFEGITAVIEQHRPDEAAVEEVFLNTNAQSTLKLGHARAAALIAPARAGLLVAEYSTRLVKKAVVGTGAADKAQIGFMIARLLPTAGKTTADCADALAVAITHANLRVANRRVA</sequence>
<keyword id="KW-0963">Cytoplasm</keyword>
<keyword id="KW-0227">DNA damage</keyword>
<keyword id="KW-0233">DNA recombination</keyword>
<keyword id="KW-0234">DNA repair</keyword>
<keyword id="KW-0238">DNA-binding</keyword>
<keyword id="KW-0255">Endonuclease</keyword>
<keyword id="KW-0378">Hydrolase</keyword>
<keyword id="KW-0460">Magnesium</keyword>
<keyword id="KW-0479">Metal-binding</keyword>
<keyword id="KW-0540">Nuclease</keyword>
<keyword id="KW-1185">Reference proteome</keyword>
<name>RUVC_CAUVC</name>
<feature type="chain" id="PRO_0000183085" description="Crossover junction endodeoxyribonuclease RuvC">
    <location>
        <begin position="1"/>
        <end position="169"/>
    </location>
</feature>
<feature type="active site" evidence="1">
    <location>
        <position position="15"/>
    </location>
</feature>
<feature type="active site" evidence="1">
    <location>
        <position position="75"/>
    </location>
</feature>
<feature type="active site" evidence="1">
    <location>
        <position position="147"/>
    </location>
</feature>
<feature type="binding site" evidence="1">
    <location>
        <position position="15"/>
    </location>
    <ligand>
        <name>Mg(2+)</name>
        <dbReference type="ChEBI" id="CHEBI:18420"/>
        <label>1</label>
    </ligand>
</feature>
<feature type="binding site" evidence="1">
    <location>
        <position position="75"/>
    </location>
    <ligand>
        <name>Mg(2+)</name>
        <dbReference type="ChEBI" id="CHEBI:18420"/>
        <label>2</label>
    </ligand>
</feature>
<feature type="binding site" evidence="1">
    <location>
        <position position="147"/>
    </location>
    <ligand>
        <name>Mg(2+)</name>
        <dbReference type="ChEBI" id="CHEBI:18420"/>
        <label>1</label>
    </ligand>
</feature>